<name>ARP5L_HUMAN</name>
<accession>Q9BPX5</accession>
<accession>Q7Z523</accession>
<feature type="chain" id="PRO_0000279480" description="Actin-related protein 2/3 complex subunit 5-like protein">
    <location>
        <begin position="1"/>
        <end position="153"/>
    </location>
</feature>
<feature type="modified residue" description="Phosphoserine" evidence="3 4 5">
    <location>
        <position position="64"/>
    </location>
</feature>
<feature type="sequence conflict" description="In Ref. 1; AAP97155." evidence="2" ref="1">
    <location>
        <position position="30"/>
    </location>
</feature>
<feature type="sequence conflict" description="In Ref. 1; AAP97155." evidence="2" ref="1">
    <original>EP</original>
    <variation>RT</variation>
    <location>
        <begin position="36"/>
        <end position="37"/>
    </location>
</feature>
<comment type="function">
    <text>May function as component of the Arp2/3 complex which is involved in regulation of actin polymerization and together with an activating nucleation-promoting factor (NPF) mediates the formation of branched actin networks.</text>
</comment>
<comment type="subunit">
    <text>May be a component of the Arp2/3 complex in which it may replace ARPC5.</text>
</comment>
<comment type="interaction">
    <interactant intactId="EBI-711189">
        <id>Q9BPX5</id>
    </interactant>
    <interactant intactId="EBI-351872">
        <id>P59998</id>
        <label>ARPC4</label>
    </interactant>
    <organismsDiffer>false</organismsDiffer>
    <experiments>8</experiments>
</comment>
<comment type="interaction">
    <interactant intactId="EBI-711189">
        <id>Q9BPX5</id>
    </interactant>
    <interactant intactId="EBI-448202">
        <id>O95257</id>
        <label>GADD45G</label>
    </interactant>
    <organismsDiffer>false</organismsDiffer>
    <experiments>4</experiments>
</comment>
<comment type="interaction">
    <interactant intactId="EBI-711189">
        <id>Q9BPX5</id>
    </interactant>
    <interactant intactId="EBI-12028784">
        <id>Q6X4W1-2</id>
        <label>NSMF</label>
    </interactant>
    <organismsDiffer>false</organismsDiffer>
    <experiments>3</experiments>
</comment>
<comment type="subcellular location">
    <subcellularLocation>
        <location evidence="1">Cytoplasm</location>
        <location evidence="1">Cytoskeleton</location>
    </subcellularLocation>
</comment>
<comment type="similarity">
    <text evidence="2">Belongs to the ARPC5 family.</text>
</comment>
<gene>
    <name type="primary">ARPC5L</name>
</gene>
<protein>
    <recommendedName>
        <fullName>Actin-related protein 2/3 complex subunit 5-like protein</fullName>
    </recommendedName>
    <alternativeName>
        <fullName>Arp2/3 complex 16 kDa subunit 2</fullName>
        <shortName>ARC16-2</shortName>
    </alternativeName>
</protein>
<sequence>MARNTLSSRFRRVDIDEFDENKFVDEQEEAAAAAAEPGPDPSEVDGLLRQGDMLRAFHAALRNSPVNTKNQAVKERAQGVVLKVLTNFKSSEIEQAVQSLDRNGVDLLMKYIYKGFEKPTENSSAVLLQWHEKALAVGGLGSIIRVLTARKTV</sequence>
<reference key="1">
    <citation type="submission" date="1998-08" db="EMBL/GenBank/DDBJ databases">
        <title>Cloning of a novel human cDNA homologous to human Arp2/3 complex 16kDa subunit (ARC16) mRNA.</title>
        <authorList>
            <person name="Zhang M."/>
            <person name="Yu L."/>
            <person name="Zhou Y."/>
            <person name="Hu P.R."/>
            <person name="Xin Y.R."/>
            <person name="Zhao S.Y."/>
        </authorList>
    </citation>
    <scope>NUCLEOTIDE SEQUENCE [MRNA]</scope>
</reference>
<reference key="2">
    <citation type="journal article" date="2004" name="Nature">
        <title>DNA sequence and analysis of human chromosome 9.</title>
        <authorList>
            <person name="Humphray S.J."/>
            <person name="Oliver K."/>
            <person name="Hunt A.R."/>
            <person name="Plumb R.W."/>
            <person name="Loveland J.E."/>
            <person name="Howe K.L."/>
            <person name="Andrews T.D."/>
            <person name="Searle S."/>
            <person name="Hunt S.E."/>
            <person name="Scott C.E."/>
            <person name="Jones M.C."/>
            <person name="Ainscough R."/>
            <person name="Almeida J.P."/>
            <person name="Ambrose K.D."/>
            <person name="Ashwell R.I.S."/>
            <person name="Babbage A.K."/>
            <person name="Babbage S."/>
            <person name="Bagguley C.L."/>
            <person name="Bailey J."/>
            <person name="Banerjee R."/>
            <person name="Barker D.J."/>
            <person name="Barlow K.F."/>
            <person name="Bates K."/>
            <person name="Beasley H."/>
            <person name="Beasley O."/>
            <person name="Bird C.P."/>
            <person name="Bray-Allen S."/>
            <person name="Brown A.J."/>
            <person name="Brown J.Y."/>
            <person name="Burford D."/>
            <person name="Burrill W."/>
            <person name="Burton J."/>
            <person name="Carder C."/>
            <person name="Carter N.P."/>
            <person name="Chapman J.C."/>
            <person name="Chen Y."/>
            <person name="Clarke G."/>
            <person name="Clark S.Y."/>
            <person name="Clee C.M."/>
            <person name="Clegg S."/>
            <person name="Collier R.E."/>
            <person name="Corby N."/>
            <person name="Crosier M."/>
            <person name="Cummings A.T."/>
            <person name="Davies J."/>
            <person name="Dhami P."/>
            <person name="Dunn M."/>
            <person name="Dutta I."/>
            <person name="Dyer L.W."/>
            <person name="Earthrowl M.E."/>
            <person name="Faulkner L."/>
            <person name="Fleming C.J."/>
            <person name="Frankish A."/>
            <person name="Frankland J.A."/>
            <person name="French L."/>
            <person name="Fricker D.G."/>
            <person name="Garner P."/>
            <person name="Garnett J."/>
            <person name="Ghori J."/>
            <person name="Gilbert J.G.R."/>
            <person name="Glison C."/>
            <person name="Grafham D.V."/>
            <person name="Gribble S."/>
            <person name="Griffiths C."/>
            <person name="Griffiths-Jones S."/>
            <person name="Grocock R."/>
            <person name="Guy J."/>
            <person name="Hall R.E."/>
            <person name="Hammond S."/>
            <person name="Harley J.L."/>
            <person name="Harrison E.S.I."/>
            <person name="Hart E.A."/>
            <person name="Heath P.D."/>
            <person name="Henderson C.D."/>
            <person name="Hopkins B.L."/>
            <person name="Howard P.J."/>
            <person name="Howden P.J."/>
            <person name="Huckle E."/>
            <person name="Johnson C."/>
            <person name="Johnson D."/>
            <person name="Joy A.A."/>
            <person name="Kay M."/>
            <person name="Keenan S."/>
            <person name="Kershaw J.K."/>
            <person name="Kimberley A.M."/>
            <person name="King A."/>
            <person name="Knights A."/>
            <person name="Laird G.K."/>
            <person name="Langford C."/>
            <person name="Lawlor S."/>
            <person name="Leongamornlert D.A."/>
            <person name="Leversha M."/>
            <person name="Lloyd C."/>
            <person name="Lloyd D.M."/>
            <person name="Lovell J."/>
            <person name="Martin S."/>
            <person name="Mashreghi-Mohammadi M."/>
            <person name="Matthews L."/>
            <person name="McLaren S."/>
            <person name="McLay K.E."/>
            <person name="McMurray A."/>
            <person name="Milne S."/>
            <person name="Nickerson T."/>
            <person name="Nisbett J."/>
            <person name="Nordsiek G."/>
            <person name="Pearce A.V."/>
            <person name="Peck A.I."/>
            <person name="Porter K.M."/>
            <person name="Pandian R."/>
            <person name="Pelan S."/>
            <person name="Phillimore B."/>
            <person name="Povey S."/>
            <person name="Ramsey Y."/>
            <person name="Rand V."/>
            <person name="Scharfe M."/>
            <person name="Sehra H.K."/>
            <person name="Shownkeen R."/>
            <person name="Sims S.K."/>
            <person name="Skuce C.D."/>
            <person name="Smith M."/>
            <person name="Steward C.A."/>
            <person name="Swarbreck D."/>
            <person name="Sycamore N."/>
            <person name="Tester J."/>
            <person name="Thorpe A."/>
            <person name="Tracey A."/>
            <person name="Tromans A."/>
            <person name="Thomas D.W."/>
            <person name="Wall M."/>
            <person name="Wallis J.M."/>
            <person name="West A.P."/>
            <person name="Whitehead S.L."/>
            <person name="Willey D.L."/>
            <person name="Williams S.A."/>
            <person name="Wilming L."/>
            <person name="Wray P.W."/>
            <person name="Young L."/>
            <person name="Ashurst J.L."/>
            <person name="Coulson A."/>
            <person name="Blocker H."/>
            <person name="Durbin R.M."/>
            <person name="Sulston J.E."/>
            <person name="Hubbard T."/>
            <person name="Jackson M.J."/>
            <person name="Bentley D.R."/>
            <person name="Beck S."/>
            <person name="Rogers J."/>
            <person name="Dunham I."/>
        </authorList>
    </citation>
    <scope>NUCLEOTIDE SEQUENCE [LARGE SCALE GENOMIC DNA]</scope>
</reference>
<reference key="3">
    <citation type="journal article" date="2004" name="Genome Res.">
        <title>The status, quality, and expansion of the NIH full-length cDNA project: the Mammalian Gene Collection (MGC).</title>
        <authorList>
            <consortium name="The MGC Project Team"/>
        </authorList>
    </citation>
    <scope>NUCLEOTIDE SEQUENCE [LARGE SCALE MRNA]</scope>
    <source>
        <tissue>Brain</tissue>
        <tissue>Placenta</tissue>
    </source>
</reference>
<reference key="4">
    <citation type="submission" date="2008-12" db="UniProtKB">
        <authorList>
            <person name="Lubec G."/>
            <person name="Chen W.-Q."/>
            <person name="Sun Y."/>
        </authorList>
    </citation>
    <scope>PROTEIN SEQUENCE OF 12-49; 90-110 AND 115-145</scope>
    <scope>IDENTIFICATION BY MASS SPECTROMETRY</scope>
    <source>
        <tissue>Fetal brain cortex</tissue>
    </source>
</reference>
<reference key="5">
    <citation type="journal article" date="2006" name="Cell">
        <title>Global, in vivo, and site-specific phosphorylation dynamics in signaling networks.</title>
        <authorList>
            <person name="Olsen J.V."/>
            <person name="Blagoev B."/>
            <person name="Gnad F."/>
            <person name="Macek B."/>
            <person name="Kumar C."/>
            <person name="Mortensen P."/>
            <person name="Mann M."/>
        </authorList>
    </citation>
    <scope>PHOSPHORYLATION [LARGE SCALE ANALYSIS] AT SER-64</scope>
    <scope>IDENTIFICATION BY MASS SPECTROMETRY [LARGE SCALE ANALYSIS]</scope>
    <source>
        <tissue>Cervix carcinoma</tissue>
    </source>
</reference>
<reference key="6">
    <citation type="journal article" date="2010" name="Sci. Signal.">
        <title>Quantitative phosphoproteomics reveals widespread full phosphorylation site occupancy during mitosis.</title>
        <authorList>
            <person name="Olsen J.V."/>
            <person name="Vermeulen M."/>
            <person name="Santamaria A."/>
            <person name="Kumar C."/>
            <person name="Miller M.L."/>
            <person name="Jensen L.J."/>
            <person name="Gnad F."/>
            <person name="Cox J."/>
            <person name="Jensen T.S."/>
            <person name="Nigg E.A."/>
            <person name="Brunak S."/>
            <person name="Mann M."/>
        </authorList>
    </citation>
    <scope>PHOSPHORYLATION [LARGE SCALE ANALYSIS] AT SER-64</scope>
    <scope>IDENTIFICATION BY MASS SPECTROMETRY [LARGE SCALE ANALYSIS]</scope>
    <source>
        <tissue>Cervix carcinoma</tissue>
    </source>
</reference>
<reference key="7">
    <citation type="journal article" date="2011" name="BMC Syst. Biol.">
        <title>Initial characterization of the human central proteome.</title>
        <authorList>
            <person name="Burkard T.R."/>
            <person name="Planyavsky M."/>
            <person name="Kaupe I."/>
            <person name="Breitwieser F.P."/>
            <person name="Buerckstuemmer T."/>
            <person name="Bennett K.L."/>
            <person name="Superti-Furga G."/>
            <person name="Colinge J."/>
        </authorList>
    </citation>
    <scope>IDENTIFICATION BY MASS SPECTROMETRY [LARGE SCALE ANALYSIS]</scope>
</reference>
<reference key="8">
    <citation type="journal article" date="2013" name="J. Proteome Res.">
        <title>Toward a comprehensive characterization of a human cancer cell phosphoproteome.</title>
        <authorList>
            <person name="Zhou H."/>
            <person name="Di Palma S."/>
            <person name="Preisinger C."/>
            <person name="Peng M."/>
            <person name="Polat A.N."/>
            <person name="Heck A.J."/>
            <person name="Mohammed S."/>
        </authorList>
    </citation>
    <scope>PHOSPHORYLATION [LARGE SCALE ANALYSIS] AT SER-64</scope>
    <scope>IDENTIFICATION BY MASS SPECTROMETRY [LARGE SCALE ANALYSIS]</scope>
    <source>
        <tissue>Cervix carcinoma</tissue>
        <tissue>Erythroleukemia</tissue>
    </source>
</reference>
<reference key="9">
    <citation type="journal article" date="2014" name="J. Proteomics">
        <title>An enzyme assisted RP-RPLC approach for in-depth analysis of human liver phosphoproteome.</title>
        <authorList>
            <person name="Bian Y."/>
            <person name="Song C."/>
            <person name="Cheng K."/>
            <person name="Dong M."/>
            <person name="Wang F."/>
            <person name="Huang J."/>
            <person name="Sun D."/>
            <person name="Wang L."/>
            <person name="Ye M."/>
            <person name="Zou H."/>
        </authorList>
    </citation>
    <scope>IDENTIFICATION BY MASS SPECTROMETRY [LARGE SCALE ANALYSIS]</scope>
    <source>
        <tissue>Liver</tissue>
    </source>
</reference>
<reference key="10">
    <citation type="journal article" date="2015" name="Proteomics">
        <title>N-terminome analysis of the human mitochondrial proteome.</title>
        <authorList>
            <person name="Vaca Jacome A.S."/>
            <person name="Rabilloud T."/>
            <person name="Schaeffer-Reiss C."/>
            <person name="Rompais M."/>
            <person name="Ayoub D."/>
            <person name="Lane L."/>
            <person name="Bairoch A."/>
            <person name="Van Dorsselaer A."/>
            <person name="Carapito C."/>
        </authorList>
    </citation>
    <scope>IDENTIFICATION BY MASS SPECTROMETRY [LARGE SCALE ANALYSIS]</scope>
</reference>
<proteinExistence type="evidence at protein level"/>
<evidence type="ECO:0000250" key="1"/>
<evidence type="ECO:0000305" key="2"/>
<evidence type="ECO:0007744" key="3">
    <source>
    </source>
</evidence>
<evidence type="ECO:0007744" key="4">
    <source>
    </source>
</evidence>
<evidence type="ECO:0007744" key="5">
    <source>
    </source>
</evidence>
<dbReference type="EMBL" id="AF087842">
    <property type="protein sequence ID" value="AAP97155.1"/>
    <property type="molecule type" value="mRNA"/>
</dbReference>
<dbReference type="EMBL" id="AL354928">
    <property type="status" value="NOT_ANNOTATED_CDS"/>
    <property type="molecule type" value="Genomic_DNA"/>
</dbReference>
<dbReference type="EMBL" id="BC000018">
    <property type="protein sequence ID" value="AAH00018.1"/>
    <property type="molecule type" value="mRNA"/>
</dbReference>
<dbReference type="EMBL" id="BC000798">
    <property type="protein sequence ID" value="AAH00798.1"/>
    <property type="molecule type" value="mRNA"/>
</dbReference>
<dbReference type="EMBL" id="BC002418">
    <property type="protein sequence ID" value="AAH02418.1"/>
    <property type="molecule type" value="mRNA"/>
</dbReference>
<dbReference type="CCDS" id="CCDS6859.1"/>
<dbReference type="RefSeq" id="NP_112240.1">
    <property type="nucleotide sequence ID" value="NM_030978.3"/>
</dbReference>
<dbReference type="PDB" id="6YW6">
    <property type="method" value="EM"/>
    <property type="resolution" value="4.20 A"/>
    <property type="chains" value="G=1-153"/>
</dbReference>
<dbReference type="PDB" id="8P94">
    <property type="method" value="EM"/>
    <property type="resolution" value="3.30 A"/>
    <property type="chains" value="G=1-153"/>
</dbReference>
<dbReference type="PDBsum" id="6YW6"/>
<dbReference type="PDBsum" id="8P94"/>
<dbReference type="EMDB" id="EMD-10959"/>
<dbReference type="EMDB" id="EMD-17558"/>
<dbReference type="SMR" id="Q9BPX5"/>
<dbReference type="BioGRID" id="123617">
    <property type="interactions" value="95"/>
</dbReference>
<dbReference type="ComplexPortal" id="CPX-2580">
    <property type="entry name" value="Actin-related protein 2/3 complex, ARPC1B-ACTR3B-ARPC5L variant"/>
</dbReference>
<dbReference type="ComplexPortal" id="CPX-2592">
    <property type="entry name" value="Actin-related protein 2/3 complex, ARPC1A-ACTR3-ARPC5L variant"/>
</dbReference>
<dbReference type="ComplexPortal" id="CPX-2663">
    <property type="entry name" value="Actin-related protein 2/3 complex, ARPC1B-ACTR3-ARPC5L variant"/>
</dbReference>
<dbReference type="ComplexPortal" id="CPX-2668">
    <property type="entry name" value="Actin-related protein 2/3 complex, ARPC1B-ACTR3B-ARPC5L variant"/>
</dbReference>
<dbReference type="DIP" id="DIP-50399N"/>
<dbReference type="FunCoup" id="Q9BPX5">
    <property type="interactions" value="1523"/>
</dbReference>
<dbReference type="IntAct" id="Q9BPX5">
    <property type="interactions" value="70"/>
</dbReference>
<dbReference type="MINT" id="Q9BPX5"/>
<dbReference type="STRING" id="9606.ENSP00000345361"/>
<dbReference type="GlyGen" id="Q9BPX5">
    <property type="glycosylation" value="1 site, 1 O-linked glycan (1 site)"/>
</dbReference>
<dbReference type="iPTMnet" id="Q9BPX5"/>
<dbReference type="PhosphoSitePlus" id="Q9BPX5"/>
<dbReference type="BioMuta" id="ARPC5L"/>
<dbReference type="DMDM" id="74752229"/>
<dbReference type="jPOST" id="Q9BPX5"/>
<dbReference type="MassIVE" id="Q9BPX5"/>
<dbReference type="PaxDb" id="9606-ENSP00000345361"/>
<dbReference type="PeptideAtlas" id="Q9BPX5"/>
<dbReference type="ProteomicsDB" id="78587"/>
<dbReference type="Pumba" id="Q9BPX5"/>
<dbReference type="TopDownProteomics" id="Q9BPX5"/>
<dbReference type="Antibodypedia" id="16361">
    <property type="antibodies" value="65 antibodies from 20 providers"/>
</dbReference>
<dbReference type="DNASU" id="81873"/>
<dbReference type="Ensembl" id="ENST00000259477.6">
    <property type="protein sequence ID" value="ENSP00000259477.6"/>
    <property type="gene ID" value="ENSG00000136950.13"/>
</dbReference>
<dbReference type="Ensembl" id="ENST00000353214.6">
    <property type="protein sequence ID" value="ENSP00000345361.2"/>
    <property type="gene ID" value="ENSG00000136950.13"/>
</dbReference>
<dbReference type="GeneID" id="81873"/>
<dbReference type="KEGG" id="hsa:81873"/>
<dbReference type="MANE-Select" id="ENST00000353214.6">
    <property type="protein sequence ID" value="ENSP00000345361.2"/>
    <property type="RefSeq nucleotide sequence ID" value="NM_030978.3"/>
    <property type="RefSeq protein sequence ID" value="NP_112240.1"/>
</dbReference>
<dbReference type="UCSC" id="uc004boz.2">
    <property type="organism name" value="human"/>
</dbReference>
<dbReference type="AGR" id="HGNC:23366"/>
<dbReference type="CTD" id="81873"/>
<dbReference type="DisGeNET" id="81873"/>
<dbReference type="GeneCards" id="ARPC5L"/>
<dbReference type="HGNC" id="HGNC:23366">
    <property type="gene designation" value="ARPC5L"/>
</dbReference>
<dbReference type="HPA" id="ENSG00000136950">
    <property type="expression patterns" value="Low tissue specificity"/>
</dbReference>
<dbReference type="neXtProt" id="NX_Q9BPX5"/>
<dbReference type="OpenTargets" id="ENSG00000136950"/>
<dbReference type="PharmGKB" id="PA134991012"/>
<dbReference type="VEuPathDB" id="HostDB:ENSG00000136950"/>
<dbReference type="eggNOG" id="KOG3380">
    <property type="taxonomic scope" value="Eukaryota"/>
</dbReference>
<dbReference type="GeneTree" id="ENSGT00940000158501"/>
<dbReference type="HOGENOM" id="CLU_101888_1_1_1"/>
<dbReference type="InParanoid" id="Q9BPX5"/>
<dbReference type="OMA" id="LWHEKAF"/>
<dbReference type="OrthoDB" id="429520at2759"/>
<dbReference type="PAN-GO" id="Q9BPX5">
    <property type="GO annotations" value="5 GO annotations based on evolutionary models"/>
</dbReference>
<dbReference type="PhylomeDB" id="Q9BPX5"/>
<dbReference type="TreeFam" id="TF319716"/>
<dbReference type="PathwayCommons" id="Q9BPX5"/>
<dbReference type="SignaLink" id="Q9BPX5"/>
<dbReference type="BioGRID-ORCS" id="81873">
    <property type="hits" value="14 hits in 1166 CRISPR screens"/>
</dbReference>
<dbReference type="ChiTaRS" id="ARPC5L">
    <property type="organism name" value="human"/>
</dbReference>
<dbReference type="GenomeRNAi" id="81873"/>
<dbReference type="Pharos" id="Q9BPX5">
    <property type="development level" value="Tdark"/>
</dbReference>
<dbReference type="PRO" id="PR:Q9BPX5"/>
<dbReference type="Proteomes" id="UP000005640">
    <property type="component" value="Chromosome 9"/>
</dbReference>
<dbReference type="RNAct" id="Q9BPX5">
    <property type="molecule type" value="protein"/>
</dbReference>
<dbReference type="Bgee" id="ENSG00000136950">
    <property type="expression patterns" value="Expressed in secondary oocyte and 206 other cell types or tissues"/>
</dbReference>
<dbReference type="ExpressionAtlas" id="Q9BPX5">
    <property type="expression patterns" value="baseline and differential"/>
</dbReference>
<dbReference type="GO" id="GO:0005885">
    <property type="term" value="C:Arp2/3 protein complex"/>
    <property type="evidence" value="ECO:0000318"/>
    <property type="project" value="GO_Central"/>
</dbReference>
<dbReference type="GO" id="GO:0005737">
    <property type="term" value="C:cytoplasm"/>
    <property type="evidence" value="ECO:0000318"/>
    <property type="project" value="GO_Central"/>
</dbReference>
<dbReference type="GO" id="GO:0070062">
    <property type="term" value="C:extracellular exosome"/>
    <property type="evidence" value="ECO:0007005"/>
    <property type="project" value="UniProtKB"/>
</dbReference>
<dbReference type="GO" id="GO:0005925">
    <property type="term" value="C:focal adhesion"/>
    <property type="evidence" value="ECO:0007005"/>
    <property type="project" value="UniProtKB"/>
</dbReference>
<dbReference type="GO" id="GO:0098978">
    <property type="term" value="C:glutamatergic synapse"/>
    <property type="evidence" value="ECO:0007669"/>
    <property type="project" value="Ensembl"/>
</dbReference>
<dbReference type="GO" id="GO:0051015">
    <property type="term" value="F:actin filament binding"/>
    <property type="evidence" value="ECO:0000318"/>
    <property type="project" value="GO_Central"/>
</dbReference>
<dbReference type="GO" id="GO:0034314">
    <property type="term" value="P:Arp2/3 complex-mediated actin nucleation"/>
    <property type="evidence" value="ECO:0000318"/>
    <property type="project" value="GO_Central"/>
</dbReference>
<dbReference type="GO" id="GO:0016477">
    <property type="term" value="P:cell migration"/>
    <property type="evidence" value="ECO:0000318"/>
    <property type="project" value="GO_Central"/>
</dbReference>
<dbReference type="GO" id="GO:0030833">
    <property type="term" value="P:regulation of actin filament polymerization"/>
    <property type="evidence" value="ECO:0007669"/>
    <property type="project" value="InterPro"/>
</dbReference>
<dbReference type="FunFam" id="1.25.40.190:FF:000001">
    <property type="entry name" value="Actin-related protein 2/3 complex subunit 5"/>
    <property type="match status" value="1"/>
</dbReference>
<dbReference type="Gene3D" id="1.25.40.190">
    <property type="entry name" value="Actin-related protein 2/3 complex subunit 5"/>
    <property type="match status" value="1"/>
</dbReference>
<dbReference type="InterPro" id="IPR006789">
    <property type="entry name" value="ARPC5"/>
</dbReference>
<dbReference type="InterPro" id="IPR036743">
    <property type="entry name" value="ARPC5_sf"/>
</dbReference>
<dbReference type="PANTHER" id="PTHR12644">
    <property type="entry name" value="ARP2/3 COMPLEX 16 KD SUBUNIT P16-ARC"/>
    <property type="match status" value="1"/>
</dbReference>
<dbReference type="Pfam" id="PF04699">
    <property type="entry name" value="P16-Arc"/>
    <property type="match status" value="1"/>
</dbReference>
<dbReference type="PIRSF" id="PIRSF039096">
    <property type="entry name" value="p16-ARC"/>
    <property type="match status" value="1"/>
</dbReference>
<dbReference type="SUPFAM" id="SSF69103">
    <property type="entry name" value="Arp2/3 complex 16 kDa subunit ARPC5"/>
    <property type="match status" value="1"/>
</dbReference>
<keyword id="KW-0002">3D-structure</keyword>
<keyword id="KW-0009">Actin-binding</keyword>
<keyword id="KW-0963">Cytoplasm</keyword>
<keyword id="KW-0206">Cytoskeleton</keyword>
<keyword id="KW-0903">Direct protein sequencing</keyword>
<keyword id="KW-0597">Phosphoprotein</keyword>
<keyword id="KW-1267">Proteomics identification</keyword>
<keyword id="KW-1185">Reference proteome</keyword>
<organism>
    <name type="scientific">Homo sapiens</name>
    <name type="common">Human</name>
    <dbReference type="NCBI Taxonomy" id="9606"/>
    <lineage>
        <taxon>Eukaryota</taxon>
        <taxon>Metazoa</taxon>
        <taxon>Chordata</taxon>
        <taxon>Craniata</taxon>
        <taxon>Vertebrata</taxon>
        <taxon>Euteleostomi</taxon>
        <taxon>Mammalia</taxon>
        <taxon>Eutheria</taxon>
        <taxon>Euarchontoglires</taxon>
        <taxon>Primates</taxon>
        <taxon>Haplorrhini</taxon>
        <taxon>Catarrhini</taxon>
        <taxon>Hominidae</taxon>
        <taxon>Homo</taxon>
    </lineage>
</organism>